<feature type="chain" id="PRO_1000203919" description="Threonine--tRNA ligase">
    <location>
        <begin position="1"/>
        <end position="648"/>
    </location>
</feature>
<feature type="domain" description="TGS" evidence="2">
    <location>
        <begin position="1"/>
        <end position="61"/>
    </location>
</feature>
<feature type="region of interest" description="Catalytic" evidence="1">
    <location>
        <begin position="242"/>
        <end position="540"/>
    </location>
</feature>
<feature type="binding site" evidence="1">
    <location>
        <position position="336"/>
    </location>
    <ligand>
        <name>Zn(2+)</name>
        <dbReference type="ChEBI" id="CHEBI:29105"/>
    </ligand>
</feature>
<feature type="binding site" evidence="1">
    <location>
        <position position="387"/>
    </location>
    <ligand>
        <name>Zn(2+)</name>
        <dbReference type="ChEBI" id="CHEBI:29105"/>
    </ligand>
</feature>
<feature type="binding site" evidence="1">
    <location>
        <position position="517"/>
    </location>
    <ligand>
        <name>Zn(2+)</name>
        <dbReference type="ChEBI" id="CHEBI:29105"/>
    </ligand>
</feature>
<reference key="1">
    <citation type="journal article" date="2009" name="PLoS Pathog.">
        <title>Genomic evidence for the evolution of Streptococcus equi: host restriction, increased virulence, and genetic exchange with human pathogens.</title>
        <authorList>
            <person name="Holden M.T.G."/>
            <person name="Heather Z."/>
            <person name="Paillot R."/>
            <person name="Steward K.F."/>
            <person name="Webb K."/>
            <person name="Ainslie F."/>
            <person name="Jourdan T."/>
            <person name="Bason N.C."/>
            <person name="Holroyd N.E."/>
            <person name="Mungall K."/>
            <person name="Quail M.A."/>
            <person name="Sanders M."/>
            <person name="Simmonds M."/>
            <person name="Willey D."/>
            <person name="Brooks K."/>
            <person name="Aanensen D.M."/>
            <person name="Spratt B.G."/>
            <person name="Jolley K.A."/>
            <person name="Maiden M.C.J."/>
            <person name="Kehoe M."/>
            <person name="Chanter N."/>
            <person name="Bentley S.D."/>
            <person name="Robinson C."/>
            <person name="Maskell D.J."/>
            <person name="Parkhill J."/>
            <person name="Waller A.S."/>
        </authorList>
    </citation>
    <scope>NUCLEOTIDE SEQUENCE [LARGE SCALE GENOMIC DNA]</scope>
    <source>
        <strain>H70</strain>
    </source>
</reference>
<name>SYT_STRS7</name>
<organism>
    <name type="scientific">Streptococcus equi subsp. zooepidemicus (strain H70)</name>
    <dbReference type="NCBI Taxonomy" id="553483"/>
    <lineage>
        <taxon>Bacteria</taxon>
        <taxon>Bacillati</taxon>
        <taxon>Bacillota</taxon>
        <taxon>Bacilli</taxon>
        <taxon>Lactobacillales</taxon>
        <taxon>Streptococcaceae</taxon>
        <taxon>Streptococcus</taxon>
    </lineage>
</organism>
<dbReference type="EC" id="6.1.1.3" evidence="1"/>
<dbReference type="EMBL" id="FM204884">
    <property type="protein sequence ID" value="CAW98547.1"/>
    <property type="molecule type" value="Genomic_DNA"/>
</dbReference>
<dbReference type="SMR" id="C0MCN7"/>
<dbReference type="KEGG" id="seq:SZO_05520"/>
<dbReference type="PATRIC" id="fig|40041.11.peg.589"/>
<dbReference type="eggNOG" id="COG0441">
    <property type="taxonomic scope" value="Bacteria"/>
</dbReference>
<dbReference type="HOGENOM" id="CLU_008554_0_1_9"/>
<dbReference type="Proteomes" id="UP000001368">
    <property type="component" value="Chromosome"/>
</dbReference>
<dbReference type="GO" id="GO:0005737">
    <property type="term" value="C:cytoplasm"/>
    <property type="evidence" value="ECO:0007669"/>
    <property type="project" value="UniProtKB-SubCell"/>
</dbReference>
<dbReference type="GO" id="GO:0005524">
    <property type="term" value="F:ATP binding"/>
    <property type="evidence" value="ECO:0007669"/>
    <property type="project" value="UniProtKB-UniRule"/>
</dbReference>
<dbReference type="GO" id="GO:0140096">
    <property type="term" value="F:catalytic activity, acting on a protein"/>
    <property type="evidence" value="ECO:0007669"/>
    <property type="project" value="UniProtKB-ARBA"/>
</dbReference>
<dbReference type="GO" id="GO:0046872">
    <property type="term" value="F:metal ion binding"/>
    <property type="evidence" value="ECO:0007669"/>
    <property type="project" value="UniProtKB-KW"/>
</dbReference>
<dbReference type="GO" id="GO:0004829">
    <property type="term" value="F:threonine-tRNA ligase activity"/>
    <property type="evidence" value="ECO:0007669"/>
    <property type="project" value="UniProtKB-UniRule"/>
</dbReference>
<dbReference type="GO" id="GO:0016740">
    <property type="term" value="F:transferase activity"/>
    <property type="evidence" value="ECO:0007669"/>
    <property type="project" value="UniProtKB-ARBA"/>
</dbReference>
<dbReference type="GO" id="GO:0000049">
    <property type="term" value="F:tRNA binding"/>
    <property type="evidence" value="ECO:0007669"/>
    <property type="project" value="UniProtKB-KW"/>
</dbReference>
<dbReference type="GO" id="GO:0006435">
    <property type="term" value="P:threonyl-tRNA aminoacylation"/>
    <property type="evidence" value="ECO:0007669"/>
    <property type="project" value="UniProtKB-UniRule"/>
</dbReference>
<dbReference type="CDD" id="cd01667">
    <property type="entry name" value="TGS_ThrRS"/>
    <property type="match status" value="1"/>
</dbReference>
<dbReference type="CDD" id="cd00860">
    <property type="entry name" value="ThrRS_anticodon"/>
    <property type="match status" value="1"/>
</dbReference>
<dbReference type="CDD" id="cd00771">
    <property type="entry name" value="ThrRS_core"/>
    <property type="match status" value="1"/>
</dbReference>
<dbReference type="FunFam" id="3.10.20.30:FF:000005">
    <property type="entry name" value="Threonine--tRNA ligase"/>
    <property type="match status" value="1"/>
</dbReference>
<dbReference type="FunFam" id="3.30.54.20:FF:000002">
    <property type="entry name" value="Threonine--tRNA ligase"/>
    <property type="match status" value="1"/>
</dbReference>
<dbReference type="FunFam" id="3.30.930.10:FF:000002">
    <property type="entry name" value="Threonine--tRNA ligase"/>
    <property type="match status" value="1"/>
</dbReference>
<dbReference type="FunFam" id="3.40.50.800:FF:000001">
    <property type="entry name" value="Threonine--tRNA ligase"/>
    <property type="match status" value="1"/>
</dbReference>
<dbReference type="FunFam" id="3.30.980.10:FF:000005">
    <property type="entry name" value="Threonyl-tRNA synthetase, mitochondrial"/>
    <property type="match status" value="1"/>
</dbReference>
<dbReference type="Gene3D" id="3.10.20.30">
    <property type="match status" value="1"/>
</dbReference>
<dbReference type="Gene3D" id="3.30.54.20">
    <property type="match status" value="1"/>
</dbReference>
<dbReference type="Gene3D" id="3.40.50.800">
    <property type="entry name" value="Anticodon-binding domain"/>
    <property type="match status" value="1"/>
</dbReference>
<dbReference type="Gene3D" id="3.30.930.10">
    <property type="entry name" value="Bira Bifunctional Protein, Domain 2"/>
    <property type="match status" value="1"/>
</dbReference>
<dbReference type="Gene3D" id="3.30.980.10">
    <property type="entry name" value="Threonyl-trna Synthetase, Chain A, domain 2"/>
    <property type="match status" value="1"/>
</dbReference>
<dbReference type="HAMAP" id="MF_00184">
    <property type="entry name" value="Thr_tRNA_synth"/>
    <property type="match status" value="1"/>
</dbReference>
<dbReference type="InterPro" id="IPR002314">
    <property type="entry name" value="aa-tRNA-synt_IIb"/>
</dbReference>
<dbReference type="InterPro" id="IPR006195">
    <property type="entry name" value="aa-tRNA-synth_II"/>
</dbReference>
<dbReference type="InterPro" id="IPR045864">
    <property type="entry name" value="aa-tRNA-synth_II/BPL/LPL"/>
</dbReference>
<dbReference type="InterPro" id="IPR004154">
    <property type="entry name" value="Anticodon-bd"/>
</dbReference>
<dbReference type="InterPro" id="IPR036621">
    <property type="entry name" value="Anticodon-bd_dom_sf"/>
</dbReference>
<dbReference type="InterPro" id="IPR012675">
    <property type="entry name" value="Beta-grasp_dom_sf"/>
</dbReference>
<dbReference type="InterPro" id="IPR004095">
    <property type="entry name" value="TGS"/>
</dbReference>
<dbReference type="InterPro" id="IPR012676">
    <property type="entry name" value="TGS-like"/>
</dbReference>
<dbReference type="InterPro" id="IPR002320">
    <property type="entry name" value="Thr-tRNA-ligase_IIa"/>
</dbReference>
<dbReference type="InterPro" id="IPR018163">
    <property type="entry name" value="Thr/Ala-tRNA-synth_IIc_edit"/>
</dbReference>
<dbReference type="InterPro" id="IPR047246">
    <property type="entry name" value="ThrRS_anticodon"/>
</dbReference>
<dbReference type="InterPro" id="IPR033728">
    <property type="entry name" value="ThrRS_core"/>
</dbReference>
<dbReference type="InterPro" id="IPR012947">
    <property type="entry name" value="tRNA_SAD"/>
</dbReference>
<dbReference type="NCBIfam" id="TIGR00418">
    <property type="entry name" value="thrS"/>
    <property type="match status" value="1"/>
</dbReference>
<dbReference type="PANTHER" id="PTHR11451:SF56">
    <property type="entry name" value="THREONINE--TRNA LIGASE 1"/>
    <property type="match status" value="1"/>
</dbReference>
<dbReference type="PANTHER" id="PTHR11451">
    <property type="entry name" value="THREONINE-TRNA LIGASE"/>
    <property type="match status" value="1"/>
</dbReference>
<dbReference type="Pfam" id="PF03129">
    <property type="entry name" value="HGTP_anticodon"/>
    <property type="match status" value="1"/>
</dbReference>
<dbReference type="Pfam" id="PF02824">
    <property type="entry name" value="TGS"/>
    <property type="match status" value="1"/>
</dbReference>
<dbReference type="Pfam" id="PF00587">
    <property type="entry name" value="tRNA-synt_2b"/>
    <property type="match status" value="1"/>
</dbReference>
<dbReference type="Pfam" id="PF07973">
    <property type="entry name" value="tRNA_SAD"/>
    <property type="match status" value="1"/>
</dbReference>
<dbReference type="PRINTS" id="PR01047">
    <property type="entry name" value="TRNASYNTHTHR"/>
</dbReference>
<dbReference type="SMART" id="SM00863">
    <property type="entry name" value="tRNA_SAD"/>
    <property type="match status" value="1"/>
</dbReference>
<dbReference type="SUPFAM" id="SSF52954">
    <property type="entry name" value="Class II aaRS ABD-related"/>
    <property type="match status" value="1"/>
</dbReference>
<dbReference type="SUPFAM" id="SSF55681">
    <property type="entry name" value="Class II aaRS and biotin synthetases"/>
    <property type="match status" value="1"/>
</dbReference>
<dbReference type="SUPFAM" id="SSF81271">
    <property type="entry name" value="TGS-like"/>
    <property type="match status" value="1"/>
</dbReference>
<dbReference type="SUPFAM" id="SSF55186">
    <property type="entry name" value="ThrRS/AlaRS common domain"/>
    <property type="match status" value="1"/>
</dbReference>
<dbReference type="PROSITE" id="PS50862">
    <property type="entry name" value="AA_TRNA_LIGASE_II"/>
    <property type="match status" value="1"/>
</dbReference>
<dbReference type="PROSITE" id="PS51880">
    <property type="entry name" value="TGS"/>
    <property type="match status" value="1"/>
</dbReference>
<gene>
    <name evidence="1" type="primary">thrS</name>
    <name type="ordered locus">SZO_05520</name>
</gene>
<sequence>MITITFPDGAVREFESGVTTFEIADSISKSLAKKALAGKFNGQLIDTTRAIEEDGSIEIITADHEDAFEVLRHSAAHLFAQAAKRLFPKLHLGVGPAIADGFYYDTDNADGQISNEDLPRIEEEMKKIVKENFPCIREEITKEEALELFKDDPYKVELINEHADDAAGLTVYRQGEFVDLCRGPHVPSTGRIQVFHLLNVAGAYWRGNSDNNMMQRVYGTAWFDKKDLKAYLTRLEEAKERDHRKLGKELDLFMISQEVGQGLPFWLPNGATIRRTLERYITDKELASGYQHVYTPPLASVELYKTSGHWEHYQEDMFPTMDMGDGEEFVLRPMNCPHHIQVYKNHVHSYRELPIRIAELGMMHRYEKSGALSGLQRVREMTLNDGHLFVMPEQIQEEFQRALQLIIDVYEDFNLTDYRFRLSYRDPKDTHKYYDNDEMWENAQSMLKAALDEMGVDYFEAEGEAAFYGPKLDIQVKTALGNEETLSTIQLDFLLPERFNLSYIGADGEEHRPVMIHRGVISTMERFTAILIETYKGAFPTWLAPRQVTVIPISNEAHIDYAWEVAKTLRDHGIRADVDDRNEKMQYKIRASQTSKIPYQLIVGDKEMQDKSVNVRRYGSKATHTEAISAFVDNILADIARKSRPAEG</sequence>
<proteinExistence type="inferred from homology"/>
<accession>C0MCN7</accession>
<keyword id="KW-0030">Aminoacyl-tRNA synthetase</keyword>
<keyword id="KW-0067">ATP-binding</keyword>
<keyword id="KW-0963">Cytoplasm</keyword>
<keyword id="KW-0436">Ligase</keyword>
<keyword id="KW-0479">Metal-binding</keyword>
<keyword id="KW-0547">Nucleotide-binding</keyword>
<keyword id="KW-0648">Protein biosynthesis</keyword>
<keyword id="KW-0694">RNA-binding</keyword>
<keyword id="KW-0820">tRNA-binding</keyword>
<keyword id="KW-0862">Zinc</keyword>
<protein>
    <recommendedName>
        <fullName evidence="1">Threonine--tRNA ligase</fullName>
        <ecNumber evidence="1">6.1.1.3</ecNumber>
    </recommendedName>
    <alternativeName>
        <fullName evidence="1">Threonyl-tRNA synthetase</fullName>
        <shortName evidence="1">ThrRS</shortName>
    </alternativeName>
</protein>
<evidence type="ECO:0000255" key="1">
    <source>
        <dbReference type="HAMAP-Rule" id="MF_00184"/>
    </source>
</evidence>
<evidence type="ECO:0000255" key="2">
    <source>
        <dbReference type="PROSITE-ProRule" id="PRU01228"/>
    </source>
</evidence>
<comment type="function">
    <text evidence="1">Catalyzes the attachment of threonine to tRNA(Thr) in a two-step reaction: L-threonine is first activated by ATP to form Thr-AMP and then transferred to the acceptor end of tRNA(Thr). Also edits incorrectly charged L-seryl-tRNA(Thr).</text>
</comment>
<comment type="catalytic activity">
    <reaction evidence="1">
        <text>tRNA(Thr) + L-threonine + ATP = L-threonyl-tRNA(Thr) + AMP + diphosphate + H(+)</text>
        <dbReference type="Rhea" id="RHEA:24624"/>
        <dbReference type="Rhea" id="RHEA-COMP:9670"/>
        <dbReference type="Rhea" id="RHEA-COMP:9704"/>
        <dbReference type="ChEBI" id="CHEBI:15378"/>
        <dbReference type="ChEBI" id="CHEBI:30616"/>
        <dbReference type="ChEBI" id="CHEBI:33019"/>
        <dbReference type="ChEBI" id="CHEBI:57926"/>
        <dbReference type="ChEBI" id="CHEBI:78442"/>
        <dbReference type="ChEBI" id="CHEBI:78534"/>
        <dbReference type="ChEBI" id="CHEBI:456215"/>
        <dbReference type="EC" id="6.1.1.3"/>
    </reaction>
</comment>
<comment type="cofactor">
    <cofactor evidence="1">
        <name>Zn(2+)</name>
        <dbReference type="ChEBI" id="CHEBI:29105"/>
    </cofactor>
    <text evidence="1">Binds 1 zinc ion per subunit.</text>
</comment>
<comment type="subunit">
    <text evidence="1">Homodimer.</text>
</comment>
<comment type="subcellular location">
    <subcellularLocation>
        <location evidence="1">Cytoplasm</location>
    </subcellularLocation>
</comment>
<comment type="similarity">
    <text evidence="1">Belongs to the class-II aminoacyl-tRNA synthetase family.</text>
</comment>